<proteinExistence type="inferred from homology"/>
<keyword id="KW-0963">Cytoplasm</keyword>
<keyword id="KW-0255">Endonuclease</keyword>
<keyword id="KW-0378">Hydrolase</keyword>
<keyword id="KW-0540">Nuclease</keyword>
<keyword id="KW-0819">tRNA processing</keyword>
<reference key="1">
    <citation type="submission" date="2007-10" db="EMBL/GenBank/DDBJ databases">
        <title>Complete sequence of Methanococcus maripaludis C6.</title>
        <authorList>
            <consortium name="US DOE Joint Genome Institute"/>
            <person name="Copeland A."/>
            <person name="Lucas S."/>
            <person name="Lapidus A."/>
            <person name="Barry K."/>
            <person name="Glavina del Rio T."/>
            <person name="Dalin E."/>
            <person name="Tice H."/>
            <person name="Pitluck S."/>
            <person name="Clum A."/>
            <person name="Schmutz J."/>
            <person name="Larimer F."/>
            <person name="Land M."/>
            <person name="Hauser L."/>
            <person name="Kyrpides N."/>
            <person name="Mikhailova N."/>
            <person name="Sieprawska-Lupa M."/>
            <person name="Whitman W.B."/>
            <person name="Richardson P."/>
        </authorList>
    </citation>
    <scope>NUCLEOTIDE SEQUENCE [LARGE SCALE GENOMIC DNA]</scope>
    <source>
        <strain>C6 / ATCC BAA-1332</strain>
    </source>
</reference>
<feature type="chain" id="PRO_1000194588" description="Ribonuclease P protein component 2">
    <location>
        <begin position="1"/>
        <end position="130"/>
    </location>
</feature>
<name>RNP2_METM6</name>
<accession>A9AB65</accession>
<sequence length="130" mass="15213">MLKTLPPTLREKKRYVALEIIFEEELFQKDVISIVRNALMNYSGVLGCSKANPWLIDYNHPYGILRISREEVDNLRSSLSLANEHRKKPINIHIIGISNSVKHIREKFLHVPHEPYYKVIQKLKKKGPKK</sequence>
<organism>
    <name type="scientific">Methanococcus maripaludis (strain C6 / ATCC BAA-1332)</name>
    <dbReference type="NCBI Taxonomy" id="444158"/>
    <lineage>
        <taxon>Archaea</taxon>
        <taxon>Methanobacteriati</taxon>
        <taxon>Methanobacteriota</taxon>
        <taxon>Methanomada group</taxon>
        <taxon>Methanococci</taxon>
        <taxon>Methanococcales</taxon>
        <taxon>Methanococcaceae</taxon>
        <taxon>Methanococcus</taxon>
    </lineage>
</organism>
<gene>
    <name evidence="1" type="primary">rnp2</name>
    <name type="ordered locus">MmarC6_1777</name>
</gene>
<evidence type="ECO:0000255" key="1">
    <source>
        <dbReference type="HAMAP-Rule" id="MF_00755"/>
    </source>
</evidence>
<comment type="function">
    <text evidence="1">Part of ribonuclease P, a protein complex that generates mature tRNA molecules by cleaving their 5'-ends.</text>
</comment>
<comment type="catalytic activity">
    <reaction evidence="1">
        <text>Endonucleolytic cleavage of RNA, removing 5'-extranucleotides from tRNA precursor.</text>
        <dbReference type="EC" id="3.1.26.5"/>
    </reaction>
</comment>
<comment type="subunit">
    <text evidence="1">Consists of a catalytic RNA component and at least 4-5 protein subunits.</text>
</comment>
<comment type="subcellular location">
    <subcellularLocation>
        <location evidence="1">Cytoplasm</location>
    </subcellularLocation>
</comment>
<comment type="similarity">
    <text evidence="1">Belongs to the eukaryotic/archaeal RNase P protein component 2 family.</text>
</comment>
<protein>
    <recommendedName>
        <fullName evidence="1">Ribonuclease P protein component 2</fullName>
        <shortName evidence="1">RNase P component 2</shortName>
        <ecNumber evidence="1">3.1.26.5</ecNumber>
    </recommendedName>
    <alternativeName>
        <fullName evidence="1">Pop5</fullName>
    </alternativeName>
</protein>
<dbReference type="EC" id="3.1.26.5" evidence="1"/>
<dbReference type="EMBL" id="CP000867">
    <property type="protein sequence ID" value="ABX02588.1"/>
    <property type="molecule type" value="Genomic_DNA"/>
</dbReference>
<dbReference type="SMR" id="A9AB65"/>
<dbReference type="STRING" id="444158.MmarC6_1777"/>
<dbReference type="KEGG" id="mmx:MmarC6_1777"/>
<dbReference type="eggNOG" id="arCOG01365">
    <property type="taxonomic scope" value="Archaea"/>
</dbReference>
<dbReference type="HOGENOM" id="CLU_137733_1_0_2"/>
<dbReference type="OrthoDB" id="19261at2157"/>
<dbReference type="PhylomeDB" id="A9AB65"/>
<dbReference type="GO" id="GO:0005737">
    <property type="term" value="C:cytoplasm"/>
    <property type="evidence" value="ECO:0007669"/>
    <property type="project" value="UniProtKB-SubCell"/>
</dbReference>
<dbReference type="GO" id="GO:0030677">
    <property type="term" value="C:ribonuclease P complex"/>
    <property type="evidence" value="ECO:0007669"/>
    <property type="project" value="UniProtKB-UniRule"/>
</dbReference>
<dbReference type="GO" id="GO:0004526">
    <property type="term" value="F:ribonuclease P activity"/>
    <property type="evidence" value="ECO:0007669"/>
    <property type="project" value="UniProtKB-UniRule"/>
</dbReference>
<dbReference type="GO" id="GO:0001682">
    <property type="term" value="P:tRNA 5'-leader removal"/>
    <property type="evidence" value="ECO:0007669"/>
    <property type="project" value="UniProtKB-UniRule"/>
</dbReference>
<dbReference type="Gene3D" id="3.30.70.3250">
    <property type="entry name" value="Ribonuclease P, Pop5 subunit"/>
    <property type="match status" value="1"/>
</dbReference>
<dbReference type="HAMAP" id="MF_00755">
    <property type="entry name" value="RNase_P_2"/>
    <property type="match status" value="1"/>
</dbReference>
<dbReference type="InterPro" id="IPR002759">
    <property type="entry name" value="Pop5/Rpp14/Rnp2-like"/>
</dbReference>
<dbReference type="InterPro" id="IPR038085">
    <property type="entry name" value="Rnp2-like_sf"/>
</dbReference>
<dbReference type="InterPro" id="IPR016434">
    <property type="entry name" value="Rnp2_archaea"/>
</dbReference>
<dbReference type="PANTHER" id="PTHR15441">
    <property type="entry name" value="RIBONUCLEASE P PROTEIN SUBUNIT P14"/>
    <property type="match status" value="1"/>
</dbReference>
<dbReference type="PANTHER" id="PTHR15441:SF2">
    <property type="entry name" value="RIBONUCLEASE P_MRP PROTEIN SUBUNIT POP5"/>
    <property type="match status" value="1"/>
</dbReference>
<dbReference type="Pfam" id="PF01900">
    <property type="entry name" value="RNase_P_Rpp14"/>
    <property type="match status" value="1"/>
</dbReference>
<dbReference type="PIRSF" id="PIRSF004952">
    <property type="entry name" value="RNase_P_2"/>
    <property type="match status" value="1"/>
</dbReference>
<dbReference type="SUPFAM" id="SSF160350">
    <property type="entry name" value="Rnp2-like"/>
    <property type="match status" value="1"/>
</dbReference>